<name>URED_ANADF</name>
<feature type="chain" id="PRO_0000340408" description="Urease accessory protein UreD">
    <location>
        <begin position="1"/>
        <end position="297"/>
    </location>
</feature>
<accession>A7HHM9</accession>
<evidence type="ECO:0000255" key="1">
    <source>
        <dbReference type="HAMAP-Rule" id="MF_01384"/>
    </source>
</evidence>
<sequence>MECPDPQPILELLEAPCPTIGQPRPEVGLRAGAGRVDIARVDGASAIVACVASSPLQLLAPSPRGRCAWIISASHGGGLLAGDEVSLEVDVGAGAVALLSTQAGTKIYRSRGEVASQGLSARVGAGALLAALPHPVSCFSGARFRQEQRFELARGASLLWLDALVAGRIARGERWAFDEYRSRIEVAIDGRTVLADALRLVPGEGPPIVARLPGVELLATVVALGPAVASAARELLERVAASPAERDAGVLAAASPLRDGLLLRVASRSVEAGLAFLRQRLAFVEAVTGADPFARTP</sequence>
<keyword id="KW-0143">Chaperone</keyword>
<keyword id="KW-0963">Cytoplasm</keyword>
<keyword id="KW-0996">Nickel insertion</keyword>
<keyword id="KW-1185">Reference proteome</keyword>
<proteinExistence type="inferred from homology"/>
<comment type="function">
    <text evidence="1">Required for maturation of urease via the functional incorporation of the urease nickel metallocenter.</text>
</comment>
<comment type="subunit">
    <text evidence="1">UreD, UreF and UreG form a complex that acts as a GTP-hydrolysis-dependent molecular chaperone, activating the urease apoprotein by helping to assemble the nickel containing metallocenter of UreC. The UreE protein probably delivers the nickel.</text>
</comment>
<comment type="subcellular location">
    <subcellularLocation>
        <location evidence="1">Cytoplasm</location>
    </subcellularLocation>
</comment>
<comment type="similarity">
    <text evidence="1">Belongs to the UreD family.</text>
</comment>
<protein>
    <recommendedName>
        <fullName evidence="1">Urease accessory protein UreD</fullName>
    </recommendedName>
</protein>
<reference key="1">
    <citation type="journal article" date="2015" name="Genome Announc.">
        <title>Complete genome sequence of Anaeromyxobacter sp. Fw109-5, an anaerobic, metal-reducing bacterium isolated from a contaminated subsurface environment.</title>
        <authorList>
            <person name="Hwang C."/>
            <person name="Copeland A."/>
            <person name="Lucas S."/>
            <person name="Lapidus A."/>
            <person name="Barry K."/>
            <person name="Glavina Del Rio T."/>
            <person name="Dalin E."/>
            <person name="Tice H."/>
            <person name="Pitluck S."/>
            <person name="Sims D."/>
            <person name="Brettin T."/>
            <person name="Bruce D.C."/>
            <person name="Detter J.C."/>
            <person name="Han C.S."/>
            <person name="Schmutz J."/>
            <person name="Larimer F.W."/>
            <person name="Land M.L."/>
            <person name="Hauser L.J."/>
            <person name="Kyrpides N."/>
            <person name="Lykidis A."/>
            <person name="Richardson P."/>
            <person name="Belieav A."/>
            <person name="Sanford R.A."/>
            <person name="Loeffler F.E."/>
            <person name="Fields M.W."/>
        </authorList>
    </citation>
    <scope>NUCLEOTIDE SEQUENCE [LARGE SCALE GENOMIC DNA]</scope>
    <source>
        <strain>Fw109-5</strain>
    </source>
</reference>
<gene>
    <name evidence="1" type="primary">ureD</name>
    <name type="ordered locus">Anae109_4047</name>
</gene>
<organism>
    <name type="scientific">Anaeromyxobacter sp. (strain Fw109-5)</name>
    <dbReference type="NCBI Taxonomy" id="404589"/>
    <lineage>
        <taxon>Bacteria</taxon>
        <taxon>Pseudomonadati</taxon>
        <taxon>Myxococcota</taxon>
        <taxon>Myxococcia</taxon>
        <taxon>Myxococcales</taxon>
        <taxon>Cystobacterineae</taxon>
        <taxon>Anaeromyxobacteraceae</taxon>
        <taxon>Anaeromyxobacter</taxon>
    </lineage>
</organism>
<dbReference type="EMBL" id="CP000769">
    <property type="protein sequence ID" value="ABS28225.1"/>
    <property type="molecule type" value="Genomic_DNA"/>
</dbReference>
<dbReference type="RefSeq" id="WP_012098863.1">
    <property type="nucleotide sequence ID" value="NC_009675.1"/>
</dbReference>
<dbReference type="SMR" id="A7HHM9"/>
<dbReference type="STRING" id="404589.Anae109_4047"/>
<dbReference type="KEGG" id="afw:Anae109_4047"/>
<dbReference type="eggNOG" id="COG0829">
    <property type="taxonomic scope" value="Bacteria"/>
</dbReference>
<dbReference type="HOGENOM" id="CLU_021703_1_1_7"/>
<dbReference type="OrthoDB" id="5521425at2"/>
<dbReference type="Proteomes" id="UP000006382">
    <property type="component" value="Chromosome"/>
</dbReference>
<dbReference type="GO" id="GO:0005737">
    <property type="term" value="C:cytoplasm"/>
    <property type="evidence" value="ECO:0007669"/>
    <property type="project" value="UniProtKB-SubCell"/>
</dbReference>
<dbReference type="GO" id="GO:0016151">
    <property type="term" value="F:nickel cation binding"/>
    <property type="evidence" value="ECO:0007669"/>
    <property type="project" value="InterPro"/>
</dbReference>
<dbReference type="HAMAP" id="MF_01384">
    <property type="entry name" value="UreD"/>
    <property type="match status" value="1"/>
</dbReference>
<dbReference type="InterPro" id="IPR002669">
    <property type="entry name" value="UreD"/>
</dbReference>
<dbReference type="PANTHER" id="PTHR33643">
    <property type="entry name" value="UREASE ACCESSORY PROTEIN D"/>
    <property type="match status" value="1"/>
</dbReference>
<dbReference type="PANTHER" id="PTHR33643:SF1">
    <property type="entry name" value="UREASE ACCESSORY PROTEIN D"/>
    <property type="match status" value="1"/>
</dbReference>
<dbReference type="Pfam" id="PF01774">
    <property type="entry name" value="UreD"/>
    <property type="match status" value="1"/>
</dbReference>